<organism>
    <name type="scientific">Legionella pneumophila</name>
    <dbReference type="NCBI Taxonomy" id="446"/>
    <lineage>
        <taxon>Bacteria</taxon>
        <taxon>Pseudomonadati</taxon>
        <taxon>Pseudomonadota</taxon>
        <taxon>Gammaproteobacteria</taxon>
        <taxon>Legionellales</taxon>
        <taxon>Legionellaceae</taxon>
        <taxon>Legionella</taxon>
    </lineage>
</organism>
<gene>
    <name evidence="1" type="primary">dnaJ</name>
</gene>
<feature type="chain" id="PRO_0000070809" description="Chaperone protein DnaJ">
    <location>
        <begin position="1"/>
        <end position="379"/>
    </location>
</feature>
<feature type="domain" description="J" evidence="1">
    <location>
        <begin position="5"/>
        <end position="70"/>
    </location>
</feature>
<feature type="repeat" description="CXXCXGXG motif">
    <location>
        <begin position="148"/>
        <end position="155"/>
    </location>
</feature>
<feature type="repeat" description="CXXCXGXG motif">
    <location>
        <begin position="165"/>
        <end position="172"/>
    </location>
</feature>
<feature type="repeat" description="CXXCXGXG motif">
    <location>
        <begin position="187"/>
        <end position="194"/>
    </location>
</feature>
<feature type="repeat" description="CXXCXGXG motif">
    <location>
        <begin position="201"/>
        <end position="208"/>
    </location>
</feature>
<feature type="zinc finger region" description="CR-type" evidence="1">
    <location>
        <begin position="135"/>
        <end position="213"/>
    </location>
</feature>
<feature type="binding site" evidence="1">
    <location>
        <position position="148"/>
    </location>
    <ligand>
        <name>Zn(2+)</name>
        <dbReference type="ChEBI" id="CHEBI:29105"/>
        <label>1</label>
    </ligand>
</feature>
<feature type="binding site" evidence="1">
    <location>
        <position position="151"/>
    </location>
    <ligand>
        <name>Zn(2+)</name>
        <dbReference type="ChEBI" id="CHEBI:29105"/>
        <label>1</label>
    </ligand>
</feature>
<feature type="binding site" evidence="1">
    <location>
        <position position="165"/>
    </location>
    <ligand>
        <name>Zn(2+)</name>
        <dbReference type="ChEBI" id="CHEBI:29105"/>
        <label>2</label>
    </ligand>
</feature>
<feature type="binding site" evidence="1">
    <location>
        <position position="168"/>
    </location>
    <ligand>
        <name>Zn(2+)</name>
        <dbReference type="ChEBI" id="CHEBI:29105"/>
        <label>2</label>
    </ligand>
</feature>
<feature type="binding site" evidence="1">
    <location>
        <position position="187"/>
    </location>
    <ligand>
        <name>Zn(2+)</name>
        <dbReference type="ChEBI" id="CHEBI:29105"/>
        <label>2</label>
    </ligand>
</feature>
<feature type="binding site" evidence="1">
    <location>
        <position position="190"/>
    </location>
    <ligand>
        <name>Zn(2+)</name>
        <dbReference type="ChEBI" id="CHEBI:29105"/>
        <label>2</label>
    </ligand>
</feature>
<feature type="binding site" evidence="1">
    <location>
        <position position="201"/>
    </location>
    <ligand>
        <name>Zn(2+)</name>
        <dbReference type="ChEBI" id="CHEBI:29105"/>
        <label>1</label>
    </ligand>
</feature>
<feature type="binding site" evidence="1">
    <location>
        <position position="204"/>
    </location>
    <ligand>
        <name>Zn(2+)</name>
        <dbReference type="ChEBI" id="CHEBI:29105"/>
        <label>1</label>
    </ligand>
</feature>
<comment type="function">
    <text evidence="1">Participates actively in the response to hyperosmotic and heat shock by preventing the aggregation of stress-denatured proteins and by disaggregating proteins, also in an autonomous, DnaK-independent fashion. Unfolded proteins bind initially to DnaJ; upon interaction with the DnaJ-bound protein, DnaK hydrolyzes its bound ATP, resulting in the formation of a stable complex. GrpE releases ADP from DnaK; ATP binding to DnaK triggers the release of the substrate protein, thus completing the reaction cycle. Several rounds of ATP-dependent interactions between DnaJ, DnaK and GrpE are required for fully efficient folding. Also involved, together with DnaK and GrpE, in the DNA replication of plasmids through activation of initiation proteins.</text>
</comment>
<comment type="cofactor">
    <cofactor evidence="1">
        <name>Zn(2+)</name>
        <dbReference type="ChEBI" id="CHEBI:29105"/>
    </cofactor>
    <text evidence="1">Binds 2 Zn(2+) ions per monomer.</text>
</comment>
<comment type="subunit">
    <text evidence="1">Homodimer.</text>
</comment>
<comment type="subcellular location">
    <subcellularLocation>
        <location evidence="1">Cytoplasm</location>
    </subcellularLocation>
</comment>
<comment type="domain">
    <text evidence="1">The J domain is necessary and sufficient to stimulate DnaK ATPase activity. Zinc center 1 plays an important role in the autonomous, DnaK-independent chaperone activity of DnaJ. Zinc center 2 is essential for interaction with DnaK and for DnaJ activity.</text>
</comment>
<comment type="similarity">
    <text evidence="1">Belongs to the DnaJ family.</text>
</comment>
<sequence length="379" mass="41280">MEQRDYYELLEVSRNASDAEIKKAYRRLAMKYHPDRNPGDTSAEEKFKEIQKAYNILSDKQKRAAYDQFGHAGVDPSMGGGPGGFGGFGGFGDVFEDIFENIFSGGRGHGRQSRGQRGADLQFNVQLTLEEAAIGKEVEITVPRHGTCTVCEGSGAKKGTSPKTCETCQGMGQVRIQQGFFSIQQTCPTCHGEGKIISDPCASCHGQGRVRESKKINVKIPAGVDNGDRVRLSGEGEAGVHGGGSGDLYVQISLKKHAIFERHENDLHCEVPISFATAALGGSIEVPTLEGRVTLKIPAETQTGKVFRLRSKGMKSVRGYGQGDLLCKVVVETPVNLSREQKELLNKLQDSLENAKGTHSPKTSSWFAGVKKFFEDMKF</sequence>
<accession>P50025</accession>
<dbReference type="EMBL" id="U15010">
    <property type="protein sequence ID" value="AAA80278.1"/>
    <property type="molecule type" value="Genomic_DNA"/>
</dbReference>
<dbReference type="RefSeq" id="WP_010947740.1">
    <property type="nucleotide sequence ID" value="NZ_UGOV01000002.1"/>
</dbReference>
<dbReference type="SMR" id="P50025"/>
<dbReference type="STRING" id="91892.BIZ52_09925"/>
<dbReference type="GeneID" id="57036018"/>
<dbReference type="eggNOG" id="COG0484">
    <property type="taxonomic scope" value="Bacteria"/>
</dbReference>
<dbReference type="OMA" id="MATDYYA"/>
<dbReference type="GO" id="GO:0005737">
    <property type="term" value="C:cytoplasm"/>
    <property type="evidence" value="ECO:0007669"/>
    <property type="project" value="UniProtKB-SubCell"/>
</dbReference>
<dbReference type="GO" id="GO:0005524">
    <property type="term" value="F:ATP binding"/>
    <property type="evidence" value="ECO:0007669"/>
    <property type="project" value="InterPro"/>
</dbReference>
<dbReference type="GO" id="GO:0031072">
    <property type="term" value="F:heat shock protein binding"/>
    <property type="evidence" value="ECO:0007669"/>
    <property type="project" value="InterPro"/>
</dbReference>
<dbReference type="GO" id="GO:0051082">
    <property type="term" value="F:unfolded protein binding"/>
    <property type="evidence" value="ECO:0007669"/>
    <property type="project" value="UniProtKB-UniRule"/>
</dbReference>
<dbReference type="GO" id="GO:0008270">
    <property type="term" value="F:zinc ion binding"/>
    <property type="evidence" value="ECO:0007669"/>
    <property type="project" value="UniProtKB-UniRule"/>
</dbReference>
<dbReference type="GO" id="GO:0051085">
    <property type="term" value="P:chaperone cofactor-dependent protein refolding"/>
    <property type="evidence" value="ECO:0007669"/>
    <property type="project" value="TreeGrafter"/>
</dbReference>
<dbReference type="GO" id="GO:0006260">
    <property type="term" value="P:DNA replication"/>
    <property type="evidence" value="ECO:0007669"/>
    <property type="project" value="UniProtKB-KW"/>
</dbReference>
<dbReference type="GO" id="GO:0042026">
    <property type="term" value="P:protein refolding"/>
    <property type="evidence" value="ECO:0007669"/>
    <property type="project" value="TreeGrafter"/>
</dbReference>
<dbReference type="GO" id="GO:0009408">
    <property type="term" value="P:response to heat"/>
    <property type="evidence" value="ECO:0007669"/>
    <property type="project" value="InterPro"/>
</dbReference>
<dbReference type="CDD" id="cd06257">
    <property type="entry name" value="DnaJ"/>
    <property type="match status" value="1"/>
</dbReference>
<dbReference type="CDD" id="cd10747">
    <property type="entry name" value="DnaJ_C"/>
    <property type="match status" value="1"/>
</dbReference>
<dbReference type="CDD" id="cd10719">
    <property type="entry name" value="DnaJ_zf"/>
    <property type="match status" value="1"/>
</dbReference>
<dbReference type="FunFam" id="1.10.287.110:FF:000034">
    <property type="entry name" value="Chaperone protein DnaJ"/>
    <property type="match status" value="1"/>
</dbReference>
<dbReference type="FunFam" id="2.10.230.10:FF:000002">
    <property type="entry name" value="Molecular chaperone DnaJ"/>
    <property type="match status" value="1"/>
</dbReference>
<dbReference type="FunFam" id="2.60.260.20:FF:000004">
    <property type="entry name" value="Molecular chaperone DnaJ"/>
    <property type="match status" value="1"/>
</dbReference>
<dbReference type="Gene3D" id="1.10.287.110">
    <property type="entry name" value="DnaJ domain"/>
    <property type="match status" value="1"/>
</dbReference>
<dbReference type="Gene3D" id="2.10.230.10">
    <property type="entry name" value="Heat shock protein DnaJ, cysteine-rich domain"/>
    <property type="match status" value="1"/>
</dbReference>
<dbReference type="Gene3D" id="2.60.260.20">
    <property type="entry name" value="Urease metallochaperone UreE, N-terminal domain"/>
    <property type="match status" value="2"/>
</dbReference>
<dbReference type="HAMAP" id="MF_01152">
    <property type="entry name" value="DnaJ"/>
    <property type="match status" value="1"/>
</dbReference>
<dbReference type="InterPro" id="IPR012724">
    <property type="entry name" value="DnaJ"/>
</dbReference>
<dbReference type="InterPro" id="IPR002939">
    <property type="entry name" value="DnaJ_C"/>
</dbReference>
<dbReference type="InterPro" id="IPR001623">
    <property type="entry name" value="DnaJ_domain"/>
</dbReference>
<dbReference type="InterPro" id="IPR018253">
    <property type="entry name" value="DnaJ_domain_CS"/>
</dbReference>
<dbReference type="InterPro" id="IPR008971">
    <property type="entry name" value="HSP40/DnaJ_pept-bd"/>
</dbReference>
<dbReference type="InterPro" id="IPR001305">
    <property type="entry name" value="HSP_DnaJ_Cys-rich_dom"/>
</dbReference>
<dbReference type="InterPro" id="IPR036410">
    <property type="entry name" value="HSP_DnaJ_Cys-rich_dom_sf"/>
</dbReference>
<dbReference type="InterPro" id="IPR036869">
    <property type="entry name" value="J_dom_sf"/>
</dbReference>
<dbReference type="NCBIfam" id="TIGR02349">
    <property type="entry name" value="DnaJ_bact"/>
    <property type="match status" value="1"/>
</dbReference>
<dbReference type="NCBIfam" id="NF008035">
    <property type="entry name" value="PRK10767.1"/>
    <property type="match status" value="1"/>
</dbReference>
<dbReference type="PANTHER" id="PTHR43096:SF48">
    <property type="entry name" value="CHAPERONE PROTEIN DNAJ"/>
    <property type="match status" value="1"/>
</dbReference>
<dbReference type="PANTHER" id="PTHR43096">
    <property type="entry name" value="DNAJ HOMOLOG 1, MITOCHONDRIAL-RELATED"/>
    <property type="match status" value="1"/>
</dbReference>
<dbReference type="Pfam" id="PF00226">
    <property type="entry name" value="DnaJ"/>
    <property type="match status" value="1"/>
</dbReference>
<dbReference type="Pfam" id="PF01556">
    <property type="entry name" value="DnaJ_C"/>
    <property type="match status" value="1"/>
</dbReference>
<dbReference type="Pfam" id="PF00684">
    <property type="entry name" value="DnaJ_CXXCXGXG"/>
    <property type="match status" value="1"/>
</dbReference>
<dbReference type="PRINTS" id="PR00625">
    <property type="entry name" value="JDOMAIN"/>
</dbReference>
<dbReference type="SMART" id="SM00271">
    <property type="entry name" value="DnaJ"/>
    <property type="match status" value="1"/>
</dbReference>
<dbReference type="SUPFAM" id="SSF46565">
    <property type="entry name" value="Chaperone J-domain"/>
    <property type="match status" value="1"/>
</dbReference>
<dbReference type="SUPFAM" id="SSF57938">
    <property type="entry name" value="DnaJ/Hsp40 cysteine-rich domain"/>
    <property type="match status" value="1"/>
</dbReference>
<dbReference type="SUPFAM" id="SSF49493">
    <property type="entry name" value="HSP40/DnaJ peptide-binding domain"/>
    <property type="match status" value="2"/>
</dbReference>
<dbReference type="PROSITE" id="PS00636">
    <property type="entry name" value="DNAJ_1"/>
    <property type="match status" value="1"/>
</dbReference>
<dbReference type="PROSITE" id="PS50076">
    <property type="entry name" value="DNAJ_2"/>
    <property type="match status" value="1"/>
</dbReference>
<dbReference type="PROSITE" id="PS51188">
    <property type="entry name" value="ZF_CR"/>
    <property type="match status" value="1"/>
</dbReference>
<keyword id="KW-0143">Chaperone</keyword>
<keyword id="KW-0963">Cytoplasm</keyword>
<keyword id="KW-0235">DNA replication</keyword>
<keyword id="KW-0479">Metal-binding</keyword>
<keyword id="KW-0677">Repeat</keyword>
<keyword id="KW-0346">Stress response</keyword>
<keyword id="KW-0862">Zinc</keyword>
<keyword id="KW-0863">Zinc-finger</keyword>
<protein>
    <recommendedName>
        <fullName evidence="1">Chaperone protein DnaJ</fullName>
    </recommendedName>
</protein>
<proteinExistence type="inferred from homology"/>
<name>DNAJ_LEGPN</name>
<evidence type="ECO:0000255" key="1">
    <source>
        <dbReference type="HAMAP-Rule" id="MF_01152"/>
    </source>
</evidence>
<reference key="1">
    <citation type="submission" date="1994-09" db="EMBL/GenBank/DDBJ databases">
        <title>Characterization of the Legionella pneumophila heat shock gene cluster containing grpE, dnaK and dnaJ.</title>
        <authorList>
            <person name="Sadosky A.B."/>
            <person name="Shuman H.A."/>
        </authorList>
    </citation>
    <scope>NUCLEOTIDE SEQUENCE [GENOMIC DNA]</scope>
    <source>
        <strain>JR32</strain>
    </source>
</reference>